<comment type="function">
    <text evidence="1">Binds to extracellular matrix proteins. Binds to pathogen-associated molecular patterns (PAMPs) present on the cell walls of Gram-positive and Gram-negative bacteria and fungi, behaving as a pattern recognition receptor (PRR). Induces bacterial and fungal aggregation and subsequent inhibition of PAMP-induced cytokine release. Does not possess intrinsic bactericidal activity. May play a role in the innate defense and homeostasis of certain epithelial surfaces (By similarity).</text>
</comment>
<comment type="subunit">
    <text evidence="1">Interacts with LGALS1 and laminin.</text>
</comment>
<comment type="interaction">
    <interactant intactId="EBI-10172867">
        <id>A1L4H1</id>
    </interactant>
    <interactant intactId="EBI-465872">
        <id>Q6QNY1</id>
        <label>BLOC1S2</label>
    </interactant>
    <organismsDiffer>false</organismsDiffer>
    <experiments>3</experiments>
</comment>
<comment type="interaction">
    <interactant intactId="EBI-10172867">
        <id>A1L4H1</id>
    </interactant>
    <interactant intactId="EBI-743488">
        <id>Q96L14</id>
        <label>CEP170P1</label>
    </interactant>
    <organismsDiffer>false</organismsDiffer>
    <experiments>3</experiments>
</comment>
<comment type="interaction">
    <interactant intactId="EBI-10172867">
        <id>A1L4H1</id>
    </interactant>
    <interactant intactId="EBI-465804">
        <id>Q96EV8</id>
        <label>DTNBP1</label>
    </interactant>
    <organismsDiffer>false</organismsDiffer>
    <experiments>3</experiments>
</comment>
<comment type="interaction">
    <interactant intactId="EBI-10172867">
        <id>A1L4H1</id>
    </interactant>
    <interactant intactId="EBI-720048">
        <id>Q9UPT5</id>
        <label>EXOC7</label>
    </interactant>
    <organismsDiffer>false</organismsDiffer>
    <experiments>3</experiments>
</comment>
<comment type="interaction">
    <interactant intactId="EBI-10172867">
        <id>A1L4H1</id>
    </interactant>
    <interactant intactId="EBI-6251402">
        <id>Q9UPT5-1</id>
        <label>EXOC7</label>
    </interactant>
    <organismsDiffer>false</organismsDiffer>
    <experiments>3</experiments>
</comment>
<comment type="interaction">
    <interactant intactId="EBI-10172867">
        <id>A1L4H1</id>
    </interactant>
    <interactant intactId="EBI-2514791">
        <id>Q96CS2</id>
        <label>HAUS1</label>
    </interactant>
    <organismsDiffer>false</organismsDiffer>
    <experiments>3</experiments>
</comment>
<comment type="interaction">
    <interactant intactId="EBI-10172867">
        <id>A1L4H1</id>
    </interactant>
    <interactant intactId="EBI-3044087">
        <id>Q7Z3Y8</id>
        <label>KRT27</label>
    </interactant>
    <organismsDiffer>false</organismsDiffer>
    <experiments>3</experiments>
</comment>
<comment type="interaction">
    <interactant intactId="EBI-10172867">
        <id>A1L4H1</id>
    </interactant>
    <interactant intactId="EBI-394704">
        <id>Q9P086</id>
        <label>MED11</label>
    </interactant>
    <organismsDiffer>false</organismsDiffer>
    <experiments>3</experiments>
</comment>
<comment type="interaction">
    <interactant intactId="EBI-10172867">
        <id>A1L4H1</id>
    </interactant>
    <interactant intactId="EBI-394678">
        <id>Q13503</id>
        <label>MED21</label>
    </interactant>
    <organismsDiffer>false</organismsDiffer>
    <experiments>6</experiments>
</comment>
<comment type="interaction">
    <interactant intactId="EBI-10172867">
        <id>A1L4H1</id>
    </interactant>
    <interactant intactId="EBI-394656">
        <id>Q9NX70</id>
        <label>MED29</label>
    </interactant>
    <organismsDiffer>false</organismsDiffer>
    <experiments>3</experiments>
</comment>
<comment type="interaction">
    <interactant intactId="EBI-10172867">
        <id>A1L4H1</id>
    </interactant>
    <interactant intactId="EBI-10172876">
        <id>Q7Z6G3-2</id>
        <label>NECAB2</label>
    </interactant>
    <organismsDiffer>false</organismsDiffer>
    <experiments>6</experiments>
</comment>
<comment type="interaction">
    <interactant intactId="EBI-10172867">
        <id>A1L4H1</id>
    </interactant>
    <interactant intactId="EBI-347978">
        <id>P37198</id>
        <label>NUP62</label>
    </interactant>
    <organismsDiffer>false</organismsDiffer>
    <experiments>6</experiments>
</comment>
<comment type="interaction">
    <interactant intactId="EBI-10172867">
        <id>A1L4H1</id>
    </interactant>
    <interactant intactId="EBI-714158">
        <id>Q13526</id>
        <label>PIN1</label>
    </interactant>
    <organismsDiffer>false</organismsDiffer>
    <experiments>3</experiments>
</comment>
<comment type="interaction">
    <interactant intactId="EBI-10172867">
        <id>A1L4H1</id>
    </interactant>
    <interactant intactId="EBI-727004">
        <id>O00560</id>
        <label>SDCBP</label>
    </interactant>
    <organismsDiffer>false</organismsDiffer>
    <experiments>3</experiments>
</comment>
<comment type="interaction">
    <interactant intactId="EBI-10172867">
        <id>A1L4H1</id>
    </interactant>
    <interactant intactId="EBI-1767971">
        <id>Q9Y6Y8</id>
        <label>SEC23IP</label>
    </interactant>
    <organismsDiffer>false</organismsDiffer>
    <experiments>6</experiments>
</comment>
<comment type="interaction">
    <interactant intactId="EBI-10172867">
        <id>A1L4H1</id>
    </interactant>
    <interactant intactId="EBI-741854">
        <id>Q96BD8</id>
        <label>SKA1</label>
    </interactant>
    <organismsDiffer>false</organismsDiffer>
    <experiments>3</experiments>
</comment>
<comment type="interaction">
    <interactant intactId="EBI-10172867">
        <id>A1L4H1</id>
    </interactant>
    <interactant intactId="EBI-710310">
        <id>Q15560</id>
        <label>TCEA2</label>
    </interactant>
    <organismsDiffer>false</organismsDiffer>
    <experiments>3</experiments>
</comment>
<comment type="interaction">
    <interactant intactId="EBI-10172867">
        <id>A1L4H1</id>
    </interactant>
    <interactant intactId="EBI-359224">
        <id>Q13077</id>
        <label>TRAF1</label>
    </interactant>
    <organismsDiffer>false</organismsDiffer>
    <experiments>3</experiments>
</comment>
<comment type="subcellular location">
    <subcellularLocation>
        <location evidence="1">Secreted</location>
    </subcellularLocation>
    <subcellularLocation>
        <location evidence="1">Cytoplasm</location>
    </subcellularLocation>
</comment>
<comment type="alternative products">
    <event type="alternative splicing"/>
    <isoform>
        <id>A1L4H1-1</id>
        <name>1</name>
        <sequence type="displayed"/>
    </isoform>
    <isoform>
        <id>A1L4H1-2</id>
        <name>2</name>
        <sequence type="described" ref="VSP_040792 VSP_040793"/>
    </isoform>
</comment>
<comment type="tissue specificity">
    <text evidence="5">Highly expressed in monocytes/macrophages and T-lymphocytes. Highly expressed in placenta and spleen, and also detected at lower levels in colon, and more weakly in lung, heart and kidney.</text>
</comment>
<comment type="sequence caution" evidence="7">
    <conflict type="erroneous initiation">
        <sequence resource="EMBL-CDS" id="AAI30539"/>
    </conflict>
    <text>Truncated N-terminus.</text>
</comment>
<comment type="sequence caution" evidence="7">
    <conflict type="erroneous initiation">
        <sequence resource="EMBL-CDS" id="AAI30541"/>
    </conflict>
    <text>Truncated N-terminus.</text>
</comment>
<comment type="sequence caution" evidence="7">
    <conflict type="frameshift">
        <sequence resource="EMBL-CDS" id="ACJ02752"/>
    </conflict>
</comment>
<accession>A1L4H1</accession>
<accession>B5MDQ5</accession>
<accession>C7S7T9</accession>
<accession>C7S7U0</accession>
<accession>K7EP70</accession>
<sequence>MRVLACLLAALVGIQAVERLRLADGPHGCAGRLEVWHGGRWGTVCDDGWDLRDAAVACRQLGCGGALAAPGGAFFGEGAGPVWLSELACRGNEGQLGLCHHRGWKAHICSHEEDAGVVCAGQRVANSRDDSTSPLDGAPWPGLLLELSPSTEEPLVTHAPRPAGNPQNASRKKSPRPKQAKSTRAPLLTTGAPRQERLRLVSGPHRCAGRLEVWHGGRWGTVCDDGWDLRDAAVACRELGCGGALAAPGGARFGPGAGPVWMDDVGCGGGEQALRDCPRSPWGRSNCDHSEDAGLVCTGPAPRLRLADGPHGCAGRLEVWHGGRWGSVCDDAWDLRDAAVACRELGCGGALAAPGGAFFGEGSGPIILDDLRCRGNETALRFCPARPWGQHDCHHREDAGAVCDGMPLGYVPPTAPTDSNNSTPREAASRPPSTMTSQAPGTAGVSPPPASPTVLWEPGPEAGSPQLRLVAGPSKCSGRLEVWHDQRWGTVCDDSWDMRDSAVVCRELGCGGPQQPDPAAGRFGWGAGPIWLDDVGCVGTEASLSDCPAAPWGKHNCAHNEDVGVTCTGPPGLDSISDPFSWSWIPGLGRDRDAWLPGELATKPSASVTASVLEKTTTKAPGKMPKSTKKWVTKNAKRPTTQPPVMPTTKHSRAQSPPDLTSQTTAALTTEASRRPTSEFTRRPTTEAPQRWTSHTTATLTPQAPRERTTKTMAMLTTQGPQEMTSESTIKSIPQASLEPSAEIPEGSPESPKDPAPSPSVSTTGESGLFRVRLADGPNRCAGRLEVWHAGRWGTVCDDNWDLRDATVACWELGCGKVRPRVGKTHYGPGTGPIWLDDMGCKGSEASLSDCPSGAWGKHNCDHEEDVGLTCTGYTDYDDYPPWTWDPTSREDLAKGTTTAGVPGHTLPWRTTRRPGSSSPAIRRLPDTGSKDGYKLPWTWDTPSGRGLAEGTPTAGKLGPTLGAGTTRSPGSPPTLRVHGDTGSPRKPWPERRPPRPAATRTAPPTPSPGPSASPGPPGPALTSDSSRELTPHSALTSEATSDAPDTSPPTPDPASRTNPDLILTSPDFALSTPDSSVVPALTPEPSPTPLPTLPKELTSDPSTPSEVTSLSPTSEQVPESDTTPDLDTTPYSSTVSEYSRSPDPSPSPHPTTTPDPTMAPDPITTLNPTVTPHFPTTPHPTTTPHPTTITHSTMIPDPTTTPQPFTTITHSTMIPDPTTTPQPFTTMQPTTTPHSTTPHPTTTPHPTTITHSTMIPDPTTTPQPFTTMQPTTMPHPTTTPHPTTTPHPTTTPHPTTTPHPTMTPDPTTTPYPTTTPDPTTTPHPTTPDPSSTPVITTVSLPTSLGTELSSPTLAPTVKPSLHPQLTFTAPAPHTSTSQIPTLEPSPALESSPSRSSTATSMDPLSTEDFKPPRSQSPNLTPPPTHTPHSASDLTVSPDPLLSPTAHPLDHPPLDPLTLGPTPGQSPGPHGPCVAPTPPVRVMACEPPALVELVAAVRDVGGQLQRLTQVVEQERQERQALLLGLTQLVEAARGLGQLGEAVKRLAEMAWTTSMPAPTTTTPEEEERPLRGDV</sequence>
<feature type="signal peptide" evidence="2">
    <location>
        <begin position="1"/>
        <end position="16"/>
    </location>
</feature>
<feature type="chain" id="PRO_0000332985" description="Soluble scavenger receptor cysteine-rich domain-containing protein SSC5D">
    <location>
        <begin position="17"/>
        <end position="1573"/>
    </location>
</feature>
<feature type="domain" description="SRCR 1" evidence="3">
    <location>
        <begin position="20"/>
        <end position="120"/>
    </location>
</feature>
<feature type="domain" description="SRCR 2" evidence="3">
    <location>
        <begin position="198"/>
        <end position="298"/>
    </location>
</feature>
<feature type="domain" description="SRCR 3" evidence="3">
    <location>
        <begin position="304"/>
        <end position="404"/>
    </location>
</feature>
<feature type="domain" description="SRCR 4" evidence="3">
    <location>
        <begin position="467"/>
        <end position="568"/>
    </location>
</feature>
<feature type="domain" description="SRCR 5" evidence="3">
    <location>
        <begin position="772"/>
        <end position="872"/>
    </location>
</feature>
<feature type="region of interest" description="Disordered" evidence="4">
    <location>
        <begin position="153"/>
        <end position="192"/>
    </location>
</feature>
<feature type="region of interest" description="Disordered" evidence="4">
    <location>
        <begin position="412"/>
        <end position="465"/>
    </location>
</feature>
<feature type="region of interest" description="Disordered" evidence="4">
    <location>
        <begin position="614"/>
        <end position="769"/>
    </location>
</feature>
<feature type="region of interest" description="Disordered" evidence="4">
    <location>
        <begin position="895"/>
        <end position="1475"/>
    </location>
</feature>
<feature type="region of interest" description="Disordered" evidence="4">
    <location>
        <begin position="1554"/>
        <end position="1573"/>
    </location>
</feature>
<feature type="compositionally biased region" description="Basic residues" evidence="4">
    <location>
        <begin position="170"/>
        <end position="181"/>
    </location>
</feature>
<feature type="compositionally biased region" description="Polar residues" evidence="4">
    <location>
        <begin position="431"/>
        <end position="440"/>
    </location>
</feature>
<feature type="compositionally biased region" description="Basic residues" evidence="4">
    <location>
        <begin position="626"/>
        <end position="637"/>
    </location>
</feature>
<feature type="compositionally biased region" description="Polar residues" evidence="4">
    <location>
        <begin position="654"/>
        <end position="671"/>
    </location>
</feature>
<feature type="compositionally biased region" description="Basic and acidic residues" evidence="4">
    <location>
        <begin position="672"/>
        <end position="685"/>
    </location>
</feature>
<feature type="compositionally biased region" description="Polar residues" evidence="4">
    <location>
        <begin position="687"/>
        <end position="702"/>
    </location>
</feature>
<feature type="compositionally biased region" description="Polar residues" evidence="4">
    <location>
        <begin position="711"/>
        <end position="735"/>
    </location>
</feature>
<feature type="compositionally biased region" description="Basic and acidic residues" evidence="4">
    <location>
        <begin position="924"/>
        <end position="934"/>
    </location>
</feature>
<feature type="compositionally biased region" description="Pro residues" evidence="4">
    <location>
        <begin position="1004"/>
        <end position="1020"/>
    </location>
</feature>
<feature type="compositionally biased region" description="Pro residues" evidence="4">
    <location>
        <begin position="1083"/>
        <end position="1093"/>
    </location>
</feature>
<feature type="compositionally biased region" description="Polar residues" evidence="4">
    <location>
        <begin position="1101"/>
        <end position="1140"/>
    </location>
</feature>
<feature type="compositionally biased region" description="Pro residues" evidence="4">
    <location>
        <begin position="1144"/>
        <end position="1160"/>
    </location>
</feature>
<feature type="compositionally biased region" description="Low complexity" evidence="4">
    <location>
        <begin position="1161"/>
        <end position="1175"/>
    </location>
</feature>
<feature type="compositionally biased region" description="Low complexity" evidence="4">
    <location>
        <begin position="1185"/>
        <end position="1277"/>
    </location>
</feature>
<feature type="compositionally biased region" description="Pro residues" evidence="4">
    <location>
        <begin position="1278"/>
        <end position="1328"/>
    </location>
</feature>
<feature type="compositionally biased region" description="Polar residues" evidence="4">
    <location>
        <begin position="1335"/>
        <end position="1354"/>
    </location>
</feature>
<feature type="compositionally biased region" description="Polar residues" evidence="4">
    <location>
        <begin position="1364"/>
        <end position="1380"/>
    </location>
</feature>
<feature type="compositionally biased region" description="Low complexity" evidence="4">
    <location>
        <begin position="1381"/>
        <end position="1401"/>
    </location>
</feature>
<feature type="compositionally biased region" description="Pro residues" evidence="4">
    <location>
        <begin position="1464"/>
        <end position="1475"/>
    </location>
</feature>
<feature type="glycosylation site" description="N-linked (GlcNAc...) asparagine" evidence="2">
    <location>
        <position position="168"/>
    </location>
</feature>
<feature type="glycosylation site" description="N-linked (GlcNAc...) asparagine" evidence="2">
    <location>
        <position position="376"/>
    </location>
</feature>
<feature type="glycosylation site" description="N-linked (GlcNAc...) asparagine" evidence="2">
    <location>
        <position position="420"/>
    </location>
</feature>
<feature type="disulfide bond" evidence="3">
    <location>
        <begin position="45"/>
        <end position="109"/>
    </location>
</feature>
<feature type="disulfide bond" evidence="3">
    <location>
        <begin position="58"/>
        <end position="119"/>
    </location>
</feature>
<feature type="disulfide bond" evidence="3">
    <location>
        <begin position="89"/>
        <end position="99"/>
    </location>
</feature>
<feature type="disulfide bond" evidence="3">
    <location>
        <begin position="223"/>
        <end position="287"/>
    </location>
</feature>
<feature type="disulfide bond" evidence="3">
    <location>
        <begin position="236"/>
        <end position="297"/>
    </location>
</feature>
<feature type="disulfide bond" evidence="3">
    <location>
        <begin position="267"/>
        <end position="277"/>
    </location>
</feature>
<feature type="disulfide bond" evidence="3">
    <location>
        <begin position="329"/>
        <end position="393"/>
    </location>
</feature>
<feature type="disulfide bond" evidence="3">
    <location>
        <begin position="342"/>
        <end position="403"/>
    </location>
</feature>
<feature type="disulfide bond" evidence="3">
    <location>
        <begin position="373"/>
        <end position="383"/>
    </location>
</feature>
<feature type="disulfide bond" evidence="3">
    <location>
        <begin position="492"/>
        <end position="557"/>
    </location>
</feature>
<feature type="disulfide bond" evidence="3">
    <location>
        <begin position="505"/>
        <end position="567"/>
    </location>
</feature>
<feature type="disulfide bond" evidence="3">
    <location>
        <begin position="537"/>
        <end position="547"/>
    </location>
</feature>
<feature type="disulfide bond" evidence="3">
    <location>
        <begin position="797"/>
        <end position="861"/>
    </location>
</feature>
<feature type="disulfide bond" evidence="3">
    <location>
        <begin position="810"/>
        <end position="871"/>
    </location>
</feature>
<feature type="disulfide bond" evidence="3">
    <location>
        <begin position="841"/>
        <end position="851"/>
    </location>
</feature>
<feature type="splice variant" id="VSP_040792" description="In isoform 2." evidence="6">
    <original>GSKDGYKLPWTWDTPSGRGLAEGTP</original>
    <variation>EPEAGAPRGDAPRSRTARVAAPP</variation>
    <location>
        <begin position="929"/>
        <end position="953"/>
    </location>
</feature>
<feature type="splice variant" id="VSP_040793" description="In isoform 2." evidence="6">
    <location>
        <begin position="954"/>
        <end position="1573"/>
    </location>
</feature>
<feature type="sequence conflict" description="In Ref. 1; ACJ02751." evidence="7" ref="1">
    <original>L</original>
    <variation>P</variation>
    <location>
        <position position="976"/>
    </location>
</feature>
<feature type="sequence conflict" description="In Ref. 1; ACJ02751." evidence="7" ref="1">
    <original>M</original>
    <variation>I</variation>
    <location>
        <position position="1274"/>
    </location>
</feature>
<feature type="sequence conflict" description="In Ref. 1; ACJ02751." evidence="7" ref="1">
    <original>P</original>
    <variation>S</variation>
    <location>
        <position position="1456"/>
    </location>
</feature>
<evidence type="ECO:0000250" key="1"/>
<evidence type="ECO:0000255" key="2"/>
<evidence type="ECO:0000255" key="3">
    <source>
        <dbReference type="PROSITE-ProRule" id="PRU00196"/>
    </source>
</evidence>
<evidence type="ECO:0000256" key="4">
    <source>
        <dbReference type="SAM" id="MobiDB-lite"/>
    </source>
</evidence>
<evidence type="ECO:0000269" key="5">
    <source>
    </source>
</evidence>
<evidence type="ECO:0000303" key="6">
    <source>
    </source>
</evidence>
<evidence type="ECO:0000305" key="7"/>
<organism>
    <name type="scientific">Homo sapiens</name>
    <name type="common">Human</name>
    <dbReference type="NCBI Taxonomy" id="9606"/>
    <lineage>
        <taxon>Eukaryota</taxon>
        <taxon>Metazoa</taxon>
        <taxon>Chordata</taxon>
        <taxon>Craniata</taxon>
        <taxon>Vertebrata</taxon>
        <taxon>Euteleostomi</taxon>
        <taxon>Mammalia</taxon>
        <taxon>Eutheria</taxon>
        <taxon>Euarchontoglires</taxon>
        <taxon>Primates</taxon>
        <taxon>Haplorrhini</taxon>
        <taxon>Catarrhini</taxon>
        <taxon>Hominidae</taxon>
        <taxon>Homo</taxon>
    </lineage>
</organism>
<protein>
    <recommendedName>
        <fullName>Soluble scavenger receptor cysteine-rich domain-containing protein SSC5D</fullName>
    </recommendedName>
    <alternativeName>
        <fullName>Soluble scavenger protein with 5 SRCR domains</fullName>
        <shortName>SSc5D</shortName>
    </alternativeName>
</protein>
<proteinExistence type="evidence at protein level"/>
<name>SRCRL_HUMAN</name>
<dbReference type="EMBL" id="EU699476">
    <property type="protein sequence ID" value="ACJ02751.1"/>
    <property type="molecule type" value="mRNA"/>
</dbReference>
<dbReference type="EMBL" id="EU699477">
    <property type="protein sequence ID" value="ACJ02752.1"/>
    <property type="status" value="ALT_FRAME"/>
    <property type="molecule type" value="mRNA"/>
</dbReference>
<dbReference type="EMBL" id="AC008735">
    <property type="status" value="NOT_ANNOTATED_CDS"/>
    <property type="molecule type" value="Genomic_DNA"/>
</dbReference>
<dbReference type="EMBL" id="BC130538">
    <property type="protein sequence ID" value="AAI30539.1"/>
    <property type="status" value="ALT_INIT"/>
    <property type="molecule type" value="mRNA"/>
</dbReference>
<dbReference type="EMBL" id="BC130540">
    <property type="protein sequence ID" value="AAI30541.1"/>
    <property type="status" value="ALT_INIT"/>
    <property type="molecule type" value="mRNA"/>
</dbReference>
<dbReference type="CCDS" id="CCDS46196.1">
    <molecule id="A1L4H1-1"/>
</dbReference>
<dbReference type="CCDS" id="CCDS59424.1">
    <molecule id="A1L4H1-2"/>
</dbReference>
<dbReference type="RefSeq" id="NP_001138422.1">
    <molecule id="A1L4H1-1"/>
    <property type="nucleotide sequence ID" value="NM_001144950.2"/>
</dbReference>
<dbReference type="RefSeq" id="NP_001182196.1">
    <molecule id="A1L4H1-2"/>
    <property type="nucleotide sequence ID" value="NM_001195267.2"/>
</dbReference>
<dbReference type="SMR" id="A1L4H1"/>
<dbReference type="BioGRID" id="129821">
    <property type="interactions" value="29"/>
</dbReference>
<dbReference type="FunCoup" id="A1L4H1">
    <property type="interactions" value="100"/>
</dbReference>
<dbReference type="IntAct" id="A1L4H1">
    <property type="interactions" value="24"/>
</dbReference>
<dbReference type="STRING" id="9606.ENSP00000374274"/>
<dbReference type="GlyCosmos" id="A1L4H1">
    <property type="glycosylation" value="17 sites, 6 glycans"/>
</dbReference>
<dbReference type="GlyGen" id="A1L4H1">
    <property type="glycosylation" value="32 sites, 8 O-linked glycans (23 sites)"/>
</dbReference>
<dbReference type="iPTMnet" id="A1L4H1"/>
<dbReference type="PhosphoSitePlus" id="A1L4H1"/>
<dbReference type="BioMuta" id="SSC5D"/>
<dbReference type="jPOST" id="A1L4H1"/>
<dbReference type="MassIVE" id="A1L4H1"/>
<dbReference type="PaxDb" id="9606-ENSP00000374274"/>
<dbReference type="PeptideAtlas" id="A1L4H1"/>
<dbReference type="ProteomicsDB" id="150">
    <molecule id="A1L4H1-1"/>
</dbReference>
<dbReference type="ProteomicsDB" id="151">
    <molecule id="A1L4H1-2"/>
</dbReference>
<dbReference type="Antibodypedia" id="50987">
    <property type="antibodies" value="60 antibodies from 12 providers"/>
</dbReference>
<dbReference type="DNASU" id="284297"/>
<dbReference type="Ensembl" id="ENST00000389623.11">
    <molecule id="A1L4H1-1"/>
    <property type="protein sequence ID" value="ENSP00000374274.4"/>
    <property type="gene ID" value="ENSG00000179954.16"/>
</dbReference>
<dbReference type="Ensembl" id="ENST00000587166.5">
    <molecule id="A1L4H1-2"/>
    <property type="protein sequence ID" value="ENSP00000467252.1"/>
    <property type="gene ID" value="ENSG00000179954.16"/>
</dbReference>
<dbReference type="GeneID" id="284297"/>
<dbReference type="KEGG" id="hsa:284297"/>
<dbReference type="MANE-Select" id="ENST00000389623.11">
    <property type="protein sequence ID" value="ENSP00000374274.4"/>
    <property type="RefSeq nucleotide sequence ID" value="NM_001144950.2"/>
    <property type="RefSeq protein sequence ID" value="NP_001138422.1"/>
</dbReference>
<dbReference type="UCSC" id="uc002qlg.5">
    <molecule id="A1L4H1-1"/>
    <property type="organism name" value="human"/>
</dbReference>
<dbReference type="AGR" id="HGNC:26641"/>
<dbReference type="CTD" id="284297"/>
<dbReference type="DisGeNET" id="284297"/>
<dbReference type="GeneCards" id="SSC5D"/>
<dbReference type="HGNC" id="HGNC:26641">
    <property type="gene designation" value="SSC5D"/>
</dbReference>
<dbReference type="HPA" id="ENSG00000179954">
    <property type="expression patterns" value="Tissue enhanced (endometrium)"/>
</dbReference>
<dbReference type="MIM" id="618194">
    <property type="type" value="gene"/>
</dbReference>
<dbReference type="neXtProt" id="NX_A1L4H1"/>
<dbReference type="OpenTargets" id="ENSG00000179954"/>
<dbReference type="VEuPathDB" id="HostDB:ENSG00000179954"/>
<dbReference type="eggNOG" id="ENOG502SECN">
    <property type="taxonomic scope" value="Eukaryota"/>
</dbReference>
<dbReference type="GeneTree" id="ENSGT00940000162592"/>
<dbReference type="HOGENOM" id="CLU_004182_1_0_1"/>
<dbReference type="InParanoid" id="A1L4H1"/>
<dbReference type="OMA" id="WTWDTPS"/>
<dbReference type="OrthoDB" id="9623674at2759"/>
<dbReference type="PAN-GO" id="A1L4H1">
    <property type="GO annotations" value="5 GO annotations based on evolutionary models"/>
</dbReference>
<dbReference type="PhylomeDB" id="A1L4H1"/>
<dbReference type="TreeFam" id="TF329295"/>
<dbReference type="PathwayCommons" id="A1L4H1"/>
<dbReference type="Reactome" id="R-HSA-3000471">
    <property type="pathway name" value="Scavenging by Class B Receptors"/>
</dbReference>
<dbReference type="SignaLink" id="A1L4H1"/>
<dbReference type="BioGRID-ORCS" id="284297">
    <property type="hits" value="11 hits in 1144 CRISPR screens"/>
</dbReference>
<dbReference type="ChiTaRS" id="SSC5D">
    <property type="organism name" value="human"/>
</dbReference>
<dbReference type="GenomeRNAi" id="284297"/>
<dbReference type="Pharos" id="A1L4H1">
    <property type="development level" value="Tbio"/>
</dbReference>
<dbReference type="PRO" id="PR:A1L4H1"/>
<dbReference type="Proteomes" id="UP000005640">
    <property type="component" value="Chromosome 19"/>
</dbReference>
<dbReference type="RNAct" id="A1L4H1">
    <property type="molecule type" value="protein"/>
</dbReference>
<dbReference type="Bgee" id="ENSG00000179954">
    <property type="expression patterns" value="Expressed in tendon of biceps brachii and 165 other cell types or tissues"/>
</dbReference>
<dbReference type="ExpressionAtlas" id="A1L4H1">
    <property type="expression patterns" value="baseline and differential"/>
</dbReference>
<dbReference type="GO" id="GO:0062023">
    <property type="term" value="C:collagen-containing extracellular matrix"/>
    <property type="evidence" value="ECO:0000250"/>
    <property type="project" value="UniProtKB"/>
</dbReference>
<dbReference type="GO" id="GO:0005737">
    <property type="term" value="C:cytoplasm"/>
    <property type="evidence" value="ECO:0007669"/>
    <property type="project" value="UniProtKB-SubCell"/>
</dbReference>
<dbReference type="GO" id="GO:0031012">
    <property type="term" value="C:extracellular matrix"/>
    <property type="evidence" value="ECO:0000318"/>
    <property type="project" value="GO_Central"/>
</dbReference>
<dbReference type="GO" id="GO:0005615">
    <property type="term" value="C:extracellular space"/>
    <property type="evidence" value="ECO:0000250"/>
    <property type="project" value="UniProtKB"/>
</dbReference>
<dbReference type="GO" id="GO:0016020">
    <property type="term" value="C:membrane"/>
    <property type="evidence" value="ECO:0007669"/>
    <property type="project" value="InterPro"/>
</dbReference>
<dbReference type="GO" id="GO:0050840">
    <property type="term" value="F:extracellular matrix binding"/>
    <property type="evidence" value="ECO:0000250"/>
    <property type="project" value="UniProtKB"/>
</dbReference>
<dbReference type="GO" id="GO:0001968">
    <property type="term" value="F:fibronectin binding"/>
    <property type="evidence" value="ECO:0000250"/>
    <property type="project" value="UniProtKB"/>
</dbReference>
<dbReference type="GO" id="GO:0043236">
    <property type="term" value="F:laminin binding"/>
    <property type="evidence" value="ECO:0000250"/>
    <property type="project" value="UniProtKB"/>
</dbReference>
<dbReference type="GO" id="GO:0005044">
    <property type="term" value="F:scavenger receptor activity"/>
    <property type="evidence" value="ECO:0000250"/>
    <property type="project" value="UniProtKB"/>
</dbReference>
<dbReference type="GO" id="GO:0006952">
    <property type="term" value="P:defense response"/>
    <property type="evidence" value="ECO:0000318"/>
    <property type="project" value="GO_Central"/>
</dbReference>
<dbReference type="GO" id="GO:0050829">
    <property type="term" value="P:defense response to Gram-negative bacterium"/>
    <property type="evidence" value="ECO:0007669"/>
    <property type="project" value="Ensembl"/>
</dbReference>
<dbReference type="GO" id="GO:0050830">
    <property type="term" value="P:defense response to Gram-positive bacterium"/>
    <property type="evidence" value="ECO:0007669"/>
    <property type="project" value="Ensembl"/>
</dbReference>
<dbReference type="GO" id="GO:0042494">
    <property type="term" value="P:detection of bacterial lipoprotein"/>
    <property type="evidence" value="ECO:0000250"/>
    <property type="project" value="UniProtKB"/>
</dbReference>
<dbReference type="GO" id="GO:0045087">
    <property type="term" value="P:innate immune response"/>
    <property type="evidence" value="ECO:0007669"/>
    <property type="project" value="UniProtKB-KW"/>
</dbReference>
<dbReference type="GO" id="GO:0032717">
    <property type="term" value="P:negative regulation of interleukin-8 production"/>
    <property type="evidence" value="ECO:0000250"/>
    <property type="project" value="UniProtKB"/>
</dbReference>
<dbReference type="FunFam" id="3.10.250.10:FF:000007">
    <property type="entry name" value="Soluble scavenger receptor cysteine-rich domain-containing protein SSC5D"/>
    <property type="match status" value="5"/>
</dbReference>
<dbReference type="Gene3D" id="3.10.250.10">
    <property type="entry name" value="SRCR-like domain"/>
    <property type="match status" value="5"/>
</dbReference>
<dbReference type="InterPro" id="IPR001190">
    <property type="entry name" value="SRCR"/>
</dbReference>
<dbReference type="InterPro" id="IPR036772">
    <property type="entry name" value="SRCR-like_dom_sf"/>
</dbReference>
<dbReference type="PANTHER" id="PTHR19331">
    <property type="entry name" value="SCAVENGER RECEPTOR DOMAIN-CONTAINING"/>
    <property type="match status" value="1"/>
</dbReference>
<dbReference type="PANTHER" id="PTHR19331:SF487">
    <property type="entry name" value="SOLUBLE SCAVENGER RECEPTOR CYSTEINE-RICH DOMAIN-CONTAINING PROTEIN SSC5D"/>
    <property type="match status" value="1"/>
</dbReference>
<dbReference type="Pfam" id="PF00530">
    <property type="entry name" value="SRCR"/>
    <property type="match status" value="5"/>
</dbReference>
<dbReference type="PRINTS" id="PR00258">
    <property type="entry name" value="SPERACTRCPTR"/>
</dbReference>
<dbReference type="SMART" id="SM00202">
    <property type="entry name" value="SR"/>
    <property type="match status" value="5"/>
</dbReference>
<dbReference type="SUPFAM" id="SSF56487">
    <property type="entry name" value="SRCR-like"/>
    <property type="match status" value="5"/>
</dbReference>
<dbReference type="PROSITE" id="PS00420">
    <property type="entry name" value="SRCR_1"/>
    <property type="match status" value="5"/>
</dbReference>
<dbReference type="PROSITE" id="PS50287">
    <property type="entry name" value="SRCR_2"/>
    <property type="match status" value="5"/>
</dbReference>
<keyword id="KW-0025">Alternative splicing</keyword>
<keyword id="KW-0963">Cytoplasm</keyword>
<keyword id="KW-0217">Developmental protein</keyword>
<keyword id="KW-1015">Disulfide bond</keyword>
<keyword id="KW-0325">Glycoprotein</keyword>
<keyword id="KW-0391">Immunity</keyword>
<keyword id="KW-0399">Innate immunity</keyword>
<keyword id="KW-1267">Proteomics identification</keyword>
<keyword id="KW-0675">Receptor</keyword>
<keyword id="KW-1185">Reference proteome</keyword>
<keyword id="KW-0677">Repeat</keyword>
<keyword id="KW-0964">Secreted</keyword>
<keyword id="KW-0732">Signal</keyword>
<reference key="1">
    <citation type="journal article" date="2009" name="Mol. Immunol.">
        <title>Molecular cloning and analysis of SSc5D, a new member of the scavenger receptor cysteine-rich superfamily.</title>
        <authorList>
            <person name="Goncalves C.M."/>
            <person name="Castro M.A."/>
            <person name="Henriques T."/>
            <person name="Oliveira M.I."/>
            <person name="Pinheiro H.C."/>
            <person name="Oliveira C."/>
            <person name="Sreenu V.B."/>
            <person name="Evans E.J."/>
            <person name="Davis S.J."/>
            <person name="Moreira A."/>
            <person name="Carmo A.M."/>
        </authorList>
    </citation>
    <scope>NUCLEOTIDE SEQUENCE [MRNA] (ISOFORMS 1 AND 2)</scope>
    <scope>TISSUE SPECIFICITY</scope>
</reference>
<reference key="2">
    <citation type="journal article" date="2004" name="Nature">
        <title>The DNA sequence and biology of human chromosome 19.</title>
        <authorList>
            <person name="Grimwood J."/>
            <person name="Gordon L.A."/>
            <person name="Olsen A.S."/>
            <person name="Terry A."/>
            <person name="Schmutz J."/>
            <person name="Lamerdin J.E."/>
            <person name="Hellsten U."/>
            <person name="Goodstein D."/>
            <person name="Couronne O."/>
            <person name="Tran-Gyamfi M."/>
            <person name="Aerts A."/>
            <person name="Altherr M."/>
            <person name="Ashworth L."/>
            <person name="Bajorek E."/>
            <person name="Black S."/>
            <person name="Branscomb E."/>
            <person name="Caenepeel S."/>
            <person name="Carrano A.V."/>
            <person name="Caoile C."/>
            <person name="Chan Y.M."/>
            <person name="Christensen M."/>
            <person name="Cleland C.A."/>
            <person name="Copeland A."/>
            <person name="Dalin E."/>
            <person name="Dehal P."/>
            <person name="Denys M."/>
            <person name="Detter J.C."/>
            <person name="Escobar J."/>
            <person name="Flowers D."/>
            <person name="Fotopulos D."/>
            <person name="Garcia C."/>
            <person name="Georgescu A.M."/>
            <person name="Glavina T."/>
            <person name="Gomez M."/>
            <person name="Gonzales E."/>
            <person name="Groza M."/>
            <person name="Hammon N."/>
            <person name="Hawkins T."/>
            <person name="Haydu L."/>
            <person name="Ho I."/>
            <person name="Huang W."/>
            <person name="Israni S."/>
            <person name="Jett J."/>
            <person name="Kadner K."/>
            <person name="Kimball H."/>
            <person name="Kobayashi A."/>
            <person name="Larionov V."/>
            <person name="Leem S.-H."/>
            <person name="Lopez F."/>
            <person name="Lou Y."/>
            <person name="Lowry S."/>
            <person name="Malfatti S."/>
            <person name="Martinez D."/>
            <person name="McCready P.M."/>
            <person name="Medina C."/>
            <person name="Morgan J."/>
            <person name="Nelson K."/>
            <person name="Nolan M."/>
            <person name="Ovcharenko I."/>
            <person name="Pitluck S."/>
            <person name="Pollard M."/>
            <person name="Popkie A.P."/>
            <person name="Predki P."/>
            <person name="Quan G."/>
            <person name="Ramirez L."/>
            <person name="Rash S."/>
            <person name="Retterer J."/>
            <person name="Rodriguez A."/>
            <person name="Rogers S."/>
            <person name="Salamov A."/>
            <person name="Salazar A."/>
            <person name="She X."/>
            <person name="Smith D."/>
            <person name="Slezak T."/>
            <person name="Solovyev V."/>
            <person name="Thayer N."/>
            <person name="Tice H."/>
            <person name="Tsai M."/>
            <person name="Ustaszewska A."/>
            <person name="Vo N."/>
            <person name="Wagner M."/>
            <person name="Wheeler J."/>
            <person name="Wu K."/>
            <person name="Xie G."/>
            <person name="Yang J."/>
            <person name="Dubchak I."/>
            <person name="Furey T.S."/>
            <person name="DeJong P."/>
            <person name="Dickson M."/>
            <person name="Gordon D."/>
            <person name="Eichler E.E."/>
            <person name="Pennacchio L.A."/>
            <person name="Richardson P."/>
            <person name="Stubbs L."/>
            <person name="Rokhsar D.S."/>
            <person name="Myers R.M."/>
            <person name="Rubin E.M."/>
            <person name="Lucas S.M."/>
        </authorList>
    </citation>
    <scope>NUCLEOTIDE SEQUENCE [LARGE SCALE GENOMIC DNA]</scope>
</reference>
<reference key="3">
    <citation type="journal article" date="2004" name="Genome Res.">
        <title>The status, quality, and expansion of the NIH full-length cDNA project: the Mammalian Gene Collection (MGC).</title>
        <authorList>
            <consortium name="The MGC Project Team"/>
        </authorList>
    </citation>
    <scope>NUCLEOTIDE SEQUENCE [LARGE SCALE MRNA] OF 1475-1573 (ISOFORM 1)</scope>
    <source>
        <tissue>Brain</tissue>
    </source>
</reference>
<gene>
    <name type="primary">SSC5D</name>
</gene>